<name>PKG3_ADE07</name>
<sequence>MHPVLRQMRPQQQAPSQQQPQKALLAP</sequence>
<evidence type="ECO:0000250" key="1"/>
<evidence type="ECO:0000250" key="2">
    <source>
        <dbReference type="UniProtKB" id="P03262"/>
    </source>
</evidence>
<evidence type="ECO:0000250" key="3">
    <source>
        <dbReference type="UniProtKB" id="P04496"/>
    </source>
</evidence>
<evidence type="ECO:0000256" key="4">
    <source>
        <dbReference type="SAM" id="MobiDB-lite"/>
    </source>
</evidence>
<evidence type="ECO:0000305" key="5"/>
<accession>P05663</accession>
<organism>
    <name type="scientific">Human adenovirus B serotype 7</name>
    <name type="common">HAdV-7</name>
    <name type="synonym">Human adenovirus 7</name>
    <dbReference type="NCBI Taxonomy" id="10519"/>
    <lineage>
        <taxon>Viruses</taxon>
        <taxon>Varidnaviria</taxon>
        <taxon>Bamfordvirae</taxon>
        <taxon>Preplasmiviricota</taxon>
        <taxon>Tectiliviricetes</taxon>
        <taxon>Rowavirales</taxon>
        <taxon>Adenoviridae</taxon>
        <taxon>Mastadenovirus</taxon>
        <taxon>Human mastadenovirus B</taxon>
    </lineage>
</organism>
<feature type="chain" id="PRO_0000221867" description="Packaging protein 3">
    <location>
        <begin position="1"/>
        <end position="27" status="greater than"/>
    </location>
</feature>
<feature type="region of interest" description="Disordered" evidence="4">
    <location>
        <begin position="1"/>
        <end position="27"/>
    </location>
</feature>
<feature type="compositionally biased region" description="Low complexity" evidence="4">
    <location>
        <begin position="7"/>
        <end position="21"/>
    </location>
</feature>
<feature type="non-terminal residue">
    <location>
        <position position="27"/>
    </location>
</feature>
<dbReference type="EMBL" id="X03000">
    <property type="protein sequence ID" value="CAA26776.1"/>
    <property type="molecule type" value="Genomic_DNA"/>
</dbReference>
<dbReference type="GO" id="GO:0042025">
    <property type="term" value="C:host cell nucleus"/>
    <property type="evidence" value="ECO:0007669"/>
    <property type="project" value="UniProtKB-SubCell"/>
</dbReference>
<proteinExistence type="evidence at transcript level"/>
<gene>
    <name type="ORF">L1</name>
</gene>
<comment type="function">
    <text evidence="1">Involved in viral genome packaging through its interaction with packaging proteins 1 and 2.</text>
</comment>
<comment type="subunit">
    <text evidence="3">Part of the genome packaging complex composed of packaging proteins 1, 2 and 3; this complex specifically binds to the packaging sequence on the left end of viral genomic DNA and performs packaging of the viral genome. Interacts with hexon-linking protein IIIa; this interaction is required to promote correct genome packaging.</text>
</comment>
<comment type="subcellular location">
    <subcellularLocation>
        <location evidence="2">Host nucleus</location>
    </subcellularLocation>
    <text evidence="2">Nuclear protein present in empty capsids and assembly intermediates.</text>
</comment>
<comment type="induction">
    <text>Expressed in the early phase and late phase of the viral replicative cycle.</text>
</comment>
<comment type="miscellaneous">
    <text evidence="1">All late proteins expressed from the major late promoter are produced by alternative splicing and alternative polyadenylation of the same gene giving rise to non-overlapping ORFs. A leader sequence is present in the N-terminus of all these mRNAs and is recognized by the viral shutoff protein to provide expression although conventional translation via ribosome scanning from the cap has been shut off in the host cell (By similarity).</text>
</comment>
<comment type="similarity">
    <text evidence="5">Belongs to the adenoviridae packaging protein 3 family.</text>
</comment>
<reference key="1">
    <citation type="journal article" date="1983" name="Gene">
        <title>The nucleotide sequence of the genes encoded in early region 2b of human adenovirus type 7.</title>
        <authorList>
            <person name="Engler J.A."/>
            <person name="Hoppe M.S."/>
            <person name="van Bree M.P."/>
        </authorList>
    </citation>
    <scope>NUCLEOTIDE SEQUENCE [GENOMIC DNA]</scope>
    <source>
        <strain>Gomen</strain>
    </source>
</reference>
<organismHost>
    <name type="scientific">Homo sapiens</name>
    <name type="common">Human</name>
    <dbReference type="NCBI Taxonomy" id="9606"/>
</organismHost>
<protein>
    <recommendedName>
        <fullName>Packaging protein 3</fullName>
    </recommendedName>
    <alternativeName>
        <fullName>L1-52/55 kDa protein</fullName>
    </alternativeName>
    <alternativeName>
        <fullName>Packaging protein 52K</fullName>
    </alternativeName>
</protein>
<keyword id="KW-1048">Host nucleus</keyword>
<keyword id="KW-0426">Late protein</keyword>
<keyword id="KW-0231">Viral genome packaging</keyword>
<keyword id="KW-1188">Viral release from host cell</keyword>